<feature type="chain" id="PRO_1000080940" description="Aspartate 1-decarboxylase beta chain" evidence="1">
    <location>
        <begin position="1"/>
        <end position="24"/>
    </location>
</feature>
<feature type="chain" id="PRO_1000080941" description="Aspartate 1-decarboxylase alpha chain" evidence="1">
    <location>
        <begin position="25"/>
        <end position="126"/>
    </location>
</feature>
<feature type="active site" description="Schiff-base intermediate with substrate; via pyruvic acid" evidence="1">
    <location>
        <position position="25"/>
    </location>
</feature>
<feature type="active site" description="Proton donor" evidence="1">
    <location>
        <position position="58"/>
    </location>
</feature>
<feature type="binding site" evidence="1">
    <location>
        <position position="57"/>
    </location>
    <ligand>
        <name>substrate</name>
    </ligand>
</feature>
<feature type="binding site" evidence="1">
    <location>
        <begin position="73"/>
        <end position="75"/>
    </location>
    <ligand>
        <name>substrate</name>
    </ligand>
</feature>
<feature type="modified residue" description="Pyruvic acid (Ser)" evidence="1">
    <location>
        <position position="25"/>
    </location>
</feature>
<dbReference type="EC" id="4.1.1.11" evidence="1"/>
<dbReference type="EMBL" id="CP000886">
    <property type="protein sequence ID" value="ABX65664.1"/>
    <property type="molecule type" value="Genomic_DNA"/>
</dbReference>
<dbReference type="RefSeq" id="WP_000621526.1">
    <property type="nucleotide sequence ID" value="NC_010102.1"/>
</dbReference>
<dbReference type="SMR" id="A9MZS9"/>
<dbReference type="GeneID" id="89550440"/>
<dbReference type="KEGG" id="spq:SPAB_00222"/>
<dbReference type="PATRIC" id="fig|1016998.12.peg.214"/>
<dbReference type="HOGENOM" id="CLU_115305_2_1_6"/>
<dbReference type="BioCyc" id="SENT1016998:SPAB_RS00905-MONOMER"/>
<dbReference type="UniPathway" id="UPA00028">
    <property type="reaction ID" value="UER00002"/>
</dbReference>
<dbReference type="Proteomes" id="UP000008556">
    <property type="component" value="Chromosome"/>
</dbReference>
<dbReference type="GO" id="GO:0005829">
    <property type="term" value="C:cytosol"/>
    <property type="evidence" value="ECO:0007669"/>
    <property type="project" value="TreeGrafter"/>
</dbReference>
<dbReference type="GO" id="GO:0004068">
    <property type="term" value="F:aspartate 1-decarboxylase activity"/>
    <property type="evidence" value="ECO:0007669"/>
    <property type="project" value="UniProtKB-UniRule"/>
</dbReference>
<dbReference type="GO" id="GO:0006523">
    <property type="term" value="P:alanine biosynthetic process"/>
    <property type="evidence" value="ECO:0007669"/>
    <property type="project" value="InterPro"/>
</dbReference>
<dbReference type="GO" id="GO:0015940">
    <property type="term" value="P:pantothenate biosynthetic process"/>
    <property type="evidence" value="ECO:0007669"/>
    <property type="project" value="UniProtKB-UniRule"/>
</dbReference>
<dbReference type="CDD" id="cd06919">
    <property type="entry name" value="Asp_decarbox"/>
    <property type="match status" value="1"/>
</dbReference>
<dbReference type="FunFam" id="2.40.40.20:FF:000004">
    <property type="entry name" value="Aspartate 1-decarboxylase"/>
    <property type="match status" value="1"/>
</dbReference>
<dbReference type="Gene3D" id="2.40.40.20">
    <property type="match status" value="1"/>
</dbReference>
<dbReference type="HAMAP" id="MF_00446">
    <property type="entry name" value="PanD"/>
    <property type="match status" value="1"/>
</dbReference>
<dbReference type="InterPro" id="IPR009010">
    <property type="entry name" value="Asp_de-COase-like_dom_sf"/>
</dbReference>
<dbReference type="InterPro" id="IPR003190">
    <property type="entry name" value="Asp_decarbox"/>
</dbReference>
<dbReference type="NCBIfam" id="TIGR00223">
    <property type="entry name" value="panD"/>
    <property type="match status" value="1"/>
</dbReference>
<dbReference type="PANTHER" id="PTHR21012">
    <property type="entry name" value="ASPARTATE 1-DECARBOXYLASE"/>
    <property type="match status" value="1"/>
</dbReference>
<dbReference type="PANTHER" id="PTHR21012:SF0">
    <property type="entry name" value="ASPARTATE 1-DECARBOXYLASE"/>
    <property type="match status" value="1"/>
</dbReference>
<dbReference type="Pfam" id="PF02261">
    <property type="entry name" value="Asp_decarbox"/>
    <property type="match status" value="1"/>
</dbReference>
<dbReference type="PIRSF" id="PIRSF006246">
    <property type="entry name" value="Asp_decarbox"/>
    <property type="match status" value="1"/>
</dbReference>
<dbReference type="SUPFAM" id="SSF50692">
    <property type="entry name" value="ADC-like"/>
    <property type="match status" value="1"/>
</dbReference>
<evidence type="ECO:0000255" key="1">
    <source>
        <dbReference type="HAMAP-Rule" id="MF_00446"/>
    </source>
</evidence>
<organism>
    <name type="scientific">Salmonella paratyphi B (strain ATCC BAA-1250 / SPB7)</name>
    <dbReference type="NCBI Taxonomy" id="1016998"/>
    <lineage>
        <taxon>Bacteria</taxon>
        <taxon>Pseudomonadati</taxon>
        <taxon>Pseudomonadota</taxon>
        <taxon>Gammaproteobacteria</taxon>
        <taxon>Enterobacterales</taxon>
        <taxon>Enterobacteriaceae</taxon>
        <taxon>Salmonella</taxon>
    </lineage>
</organism>
<proteinExistence type="inferred from homology"/>
<name>PAND_SALPB</name>
<reference key="1">
    <citation type="submission" date="2007-11" db="EMBL/GenBank/DDBJ databases">
        <authorList>
            <consortium name="The Salmonella enterica serovar Paratyphi B Genome Sequencing Project"/>
            <person name="McClelland M."/>
            <person name="Sanderson E.K."/>
            <person name="Porwollik S."/>
            <person name="Spieth J."/>
            <person name="Clifton W.S."/>
            <person name="Fulton R."/>
            <person name="Cordes M."/>
            <person name="Wollam A."/>
            <person name="Shah N."/>
            <person name="Pepin K."/>
            <person name="Bhonagiri V."/>
            <person name="Nash W."/>
            <person name="Johnson M."/>
            <person name="Thiruvilangam P."/>
            <person name="Wilson R."/>
        </authorList>
    </citation>
    <scope>NUCLEOTIDE SEQUENCE [LARGE SCALE GENOMIC DNA]</scope>
    <source>
        <strain>ATCC BAA-1250 / SPB7</strain>
    </source>
</reference>
<protein>
    <recommendedName>
        <fullName evidence="1">Aspartate 1-decarboxylase</fullName>
        <ecNumber evidence="1">4.1.1.11</ecNumber>
    </recommendedName>
    <alternativeName>
        <fullName evidence="1">Aspartate alpha-decarboxylase</fullName>
    </alternativeName>
    <component>
        <recommendedName>
            <fullName evidence="1">Aspartate 1-decarboxylase beta chain</fullName>
        </recommendedName>
    </component>
    <component>
        <recommendedName>
            <fullName evidence="1">Aspartate 1-decarboxylase alpha chain</fullName>
        </recommendedName>
    </component>
</protein>
<accession>A9MZS9</accession>
<comment type="function">
    <text evidence="1">Catalyzes the pyruvoyl-dependent decarboxylation of aspartate to produce beta-alanine.</text>
</comment>
<comment type="catalytic activity">
    <reaction evidence="1">
        <text>L-aspartate + H(+) = beta-alanine + CO2</text>
        <dbReference type="Rhea" id="RHEA:19497"/>
        <dbReference type="ChEBI" id="CHEBI:15378"/>
        <dbReference type="ChEBI" id="CHEBI:16526"/>
        <dbReference type="ChEBI" id="CHEBI:29991"/>
        <dbReference type="ChEBI" id="CHEBI:57966"/>
        <dbReference type="EC" id="4.1.1.11"/>
    </reaction>
</comment>
<comment type="cofactor">
    <cofactor evidence="1">
        <name>pyruvate</name>
        <dbReference type="ChEBI" id="CHEBI:15361"/>
    </cofactor>
    <text evidence="1">Binds 1 pyruvoyl group covalently per subunit.</text>
</comment>
<comment type="pathway">
    <text evidence="1">Cofactor biosynthesis; (R)-pantothenate biosynthesis; beta-alanine from L-aspartate: step 1/1.</text>
</comment>
<comment type="subunit">
    <text evidence="1">Heterooctamer of four alpha and four beta subunits.</text>
</comment>
<comment type="subcellular location">
    <subcellularLocation>
        <location evidence="1">Cytoplasm</location>
    </subcellularLocation>
</comment>
<comment type="PTM">
    <text evidence="1">Is synthesized initially as an inactive proenzyme, which is activated by self-cleavage at a specific serine bond to produce a beta-subunit with a hydroxyl group at its C-terminus and an alpha-subunit with a pyruvoyl group at its N-terminus.</text>
</comment>
<comment type="similarity">
    <text evidence="1">Belongs to the PanD family.</text>
</comment>
<keyword id="KW-0068">Autocatalytic cleavage</keyword>
<keyword id="KW-0963">Cytoplasm</keyword>
<keyword id="KW-0210">Decarboxylase</keyword>
<keyword id="KW-0456">Lyase</keyword>
<keyword id="KW-0566">Pantothenate biosynthesis</keyword>
<keyword id="KW-0670">Pyruvate</keyword>
<keyword id="KW-0704">Schiff base</keyword>
<keyword id="KW-0865">Zymogen</keyword>
<gene>
    <name evidence="1" type="primary">panD</name>
    <name type="ordered locus">SPAB_00222</name>
</gene>
<sequence length="126" mass="13887">MIRTMLQGKLHRVKVTQADLHYEGSCAIDQDFLDASGILENEAIDIWNVTNGKRFSTYAIAAERGSRIISVNGAAAHCAEVGDIVIIASFVTMSDEEARTWRPKVAYFEGDNEMKRTAKAIPVQVA</sequence>